<keyword id="KW-0150">Chloroplast</keyword>
<keyword id="KW-0456">Lyase</keyword>
<keyword id="KW-0460">Magnesium</keyword>
<keyword id="KW-0479">Metal-binding</keyword>
<keyword id="KW-0611">Plant defense</keyword>
<keyword id="KW-0934">Plastid</keyword>
<keyword id="KW-1185">Reference proteome</keyword>
<keyword id="KW-0809">Transit peptide</keyword>
<comment type="function">
    <text evidence="4">Involved in the production of antifungal dolabralexin phytoalexins in response to biotic and abiotic stresses (PubMed:29475898). In response to fungal infection and in associtation with AN2, is involved in the production dolabradiene, a type of antifungal phytoalexin (PubMed:29475898). Converts ent-copalyl disphosphate (ent-CPP) to dolabradiene (PubMed:29475898).</text>
</comment>
<comment type="catalytic activity">
    <reaction evidence="4">
        <text>ent-copalyl diphosphate = dolabradiene + diphosphate</text>
        <dbReference type="Rhea" id="RHEA:58160"/>
        <dbReference type="ChEBI" id="CHEBI:33019"/>
        <dbReference type="ChEBI" id="CHEBI:58553"/>
        <dbReference type="ChEBI" id="CHEBI:141822"/>
        <dbReference type="EC" id="4.2.3.196"/>
    </reaction>
    <physiologicalReaction direction="left-to-right" evidence="4">
        <dbReference type="Rhea" id="RHEA:58161"/>
    </physiologicalReaction>
</comment>
<comment type="cofactor">
    <cofactor evidence="1">
        <name>Mg(2+)</name>
        <dbReference type="ChEBI" id="CHEBI:18420"/>
    </cofactor>
    <text evidence="1">Binds 3 Mg(2+) ions per subunit.</text>
</comment>
<comment type="subcellular location">
    <subcellularLocation>
        <location evidence="2">Plastid</location>
        <location evidence="2">Chloroplast</location>
    </subcellularLocation>
</comment>
<comment type="domain">
    <text evidence="6">The Asp-Asp-Xaa-Xaa-Asp/Glu (DDXXD/E) motif is important for the catalytic activity, presumably through binding to Mg(2+).</text>
</comment>
<comment type="similarity">
    <text evidence="6">Belongs to the terpene synthase family.</text>
</comment>
<organism>
    <name type="scientific">Zea mays</name>
    <name type="common">Maize</name>
    <dbReference type="NCBI Taxonomy" id="4577"/>
    <lineage>
        <taxon>Eukaryota</taxon>
        <taxon>Viridiplantae</taxon>
        <taxon>Streptophyta</taxon>
        <taxon>Embryophyta</taxon>
        <taxon>Tracheophyta</taxon>
        <taxon>Spermatophyta</taxon>
        <taxon>Magnoliopsida</taxon>
        <taxon>Liliopsida</taxon>
        <taxon>Poales</taxon>
        <taxon>Poaceae</taxon>
        <taxon>PACMAD clade</taxon>
        <taxon>Panicoideae</taxon>
        <taxon>Andropogonodae</taxon>
        <taxon>Andropogoneae</taxon>
        <taxon>Tripsacinae</taxon>
        <taxon>Zea</taxon>
    </lineage>
</organism>
<proteinExistence type="evidence at protein level"/>
<gene>
    <name evidence="5" type="primary">KSL4</name>
    <name evidence="7" type="ORF">ZEAMMB73_Zm00001d032858</name>
</gene>
<name>KSL4_MAIZE</name>
<accession>A0A1D6KUI6</accession>
<accession>C0PHK0</accession>
<reference key="1">
    <citation type="journal article" date="2009" name="Science">
        <title>The B73 maize genome: complexity, diversity, and dynamics.</title>
        <authorList>
            <person name="Schnable P.S."/>
            <person name="Ware D."/>
            <person name="Fulton R.S."/>
            <person name="Stein J.C."/>
            <person name="Wei F."/>
            <person name="Pasternak S."/>
            <person name="Liang C."/>
            <person name="Zhang J."/>
            <person name="Fulton L."/>
            <person name="Graves T.A."/>
            <person name="Minx P."/>
            <person name="Reily A.D."/>
            <person name="Courtney L."/>
            <person name="Kruchowski S.S."/>
            <person name="Tomlinson C."/>
            <person name="Strong C."/>
            <person name="Delehaunty K."/>
            <person name="Fronick C."/>
            <person name="Courtney B."/>
            <person name="Rock S.M."/>
            <person name="Belter E."/>
            <person name="Du F."/>
            <person name="Kim K."/>
            <person name="Abbott R.M."/>
            <person name="Cotton M."/>
            <person name="Levy A."/>
            <person name="Marchetto P."/>
            <person name="Ochoa K."/>
            <person name="Jackson S.M."/>
            <person name="Gillam B."/>
            <person name="Chen W."/>
            <person name="Yan L."/>
            <person name="Higginbotham J."/>
            <person name="Cardenas M."/>
            <person name="Waligorski J."/>
            <person name="Applebaum E."/>
            <person name="Phelps L."/>
            <person name="Falcone J."/>
            <person name="Kanchi K."/>
            <person name="Thane T."/>
            <person name="Scimone A."/>
            <person name="Thane N."/>
            <person name="Henke J."/>
            <person name="Wang T."/>
            <person name="Ruppert J."/>
            <person name="Shah N."/>
            <person name="Rotter K."/>
            <person name="Hodges J."/>
            <person name="Ingenthron E."/>
            <person name="Cordes M."/>
            <person name="Kohlberg S."/>
            <person name="Sgro J."/>
            <person name="Delgado B."/>
            <person name="Mead K."/>
            <person name="Chinwalla A."/>
            <person name="Leonard S."/>
            <person name="Crouse K."/>
            <person name="Collura K."/>
            <person name="Kudrna D."/>
            <person name="Currie J."/>
            <person name="He R."/>
            <person name="Angelova A."/>
            <person name="Rajasekar S."/>
            <person name="Mueller T."/>
            <person name="Lomeli R."/>
            <person name="Scara G."/>
            <person name="Ko A."/>
            <person name="Delaney K."/>
            <person name="Wissotski M."/>
            <person name="Lopez G."/>
            <person name="Campos D."/>
            <person name="Braidotti M."/>
            <person name="Ashley E."/>
            <person name="Golser W."/>
            <person name="Kim H."/>
            <person name="Lee S."/>
            <person name="Lin J."/>
            <person name="Dujmic Z."/>
            <person name="Kim W."/>
            <person name="Talag J."/>
            <person name="Zuccolo A."/>
            <person name="Fan C."/>
            <person name="Sebastian A."/>
            <person name="Kramer M."/>
            <person name="Spiegel L."/>
            <person name="Nascimento L."/>
            <person name="Zutavern T."/>
            <person name="Miller B."/>
            <person name="Ambroise C."/>
            <person name="Muller S."/>
            <person name="Spooner W."/>
            <person name="Narechania A."/>
            <person name="Ren L."/>
            <person name="Wei S."/>
            <person name="Kumari S."/>
            <person name="Faga B."/>
            <person name="Levy M.J."/>
            <person name="McMahan L."/>
            <person name="Van Buren P."/>
            <person name="Vaughn M.W."/>
            <person name="Ying K."/>
            <person name="Yeh C.-T."/>
            <person name="Emrich S.J."/>
            <person name="Jia Y."/>
            <person name="Kalyanaraman A."/>
            <person name="Hsia A.-P."/>
            <person name="Barbazuk W.B."/>
            <person name="Baucom R.S."/>
            <person name="Brutnell T.P."/>
            <person name="Carpita N.C."/>
            <person name="Chaparro C."/>
            <person name="Chia J.-M."/>
            <person name="Deragon J.-M."/>
            <person name="Estill J.C."/>
            <person name="Fu Y."/>
            <person name="Jeddeloh J.A."/>
            <person name="Han Y."/>
            <person name="Lee H."/>
            <person name="Li P."/>
            <person name="Lisch D.R."/>
            <person name="Liu S."/>
            <person name="Liu Z."/>
            <person name="Nagel D.H."/>
            <person name="McCann M.C."/>
            <person name="SanMiguel P."/>
            <person name="Myers A.M."/>
            <person name="Nettleton D."/>
            <person name="Nguyen J."/>
            <person name="Penning B.W."/>
            <person name="Ponnala L."/>
            <person name="Schneider K.L."/>
            <person name="Schwartz D.C."/>
            <person name="Sharma A."/>
            <person name="Soderlund C."/>
            <person name="Springer N.M."/>
            <person name="Sun Q."/>
            <person name="Wang H."/>
            <person name="Waterman M."/>
            <person name="Westerman R."/>
            <person name="Wolfgruber T.K."/>
            <person name="Yang L."/>
            <person name="Yu Y."/>
            <person name="Zhang L."/>
            <person name="Zhou S."/>
            <person name="Zhu Q."/>
            <person name="Bennetzen J.L."/>
            <person name="Dawe R.K."/>
            <person name="Jiang J."/>
            <person name="Jiang N."/>
            <person name="Presting G.G."/>
            <person name="Wessler S.R."/>
            <person name="Aluru S."/>
            <person name="Martienssen R.A."/>
            <person name="Clifton S.W."/>
            <person name="McCombie W.R."/>
            <person name="Wing R.A."/>
            <person name="Wilson R.K."/>
        </authorList>
    </citation>
    <scope>NUCLEOTIDE SEQUENCE [LARGE SCALE GENOMIC DNA]</scope>
    <source>
        <strain>cv. B73</strain>
    </source>
</reference>
<reference key="2">
    <citation type="journal article" date="2009" name="PLoS Genet.">
        <title>Sequencing, mapping, and analysis of 27,455 maize full-length cDNAs.</title>
        <authorList>
            <person name="Soderlund C."/>
            <person name="Descour A."/>
            <person name="Kudrna D."/>
            <person name="Bomhoff M."/>
            <person name="Boyd L."/>
            <person name="Currie J."/>
            <person name="Angelova A."/>
            <person name="Collura K."/>
            <person name="Wissotski M."/>
            <person name="Ashley E."/>
            <person name="Morrow D."/>
            <person name="Fernandes J."/>
            <person name="Walbot V."/>
            <person name="Yu Y."/>
        </authorList>
    </citation>
    <scope>NUCLEOTIDE SEQUENCE [LARGE SCALE MRNA]</scope>
    <source>
        <strain>cv. B73</strain>
    </source>
</reference>
<reference key="3">
    <citation type="journal article" date="2018" name="Plant Physiol.">
        <title>Discovery, biosynthesis and stress-related accumulation of dolabradiene-derived defenses in maize.</title>
        <authorList>
            <person name="Mafu S."/>
            <person name="Ding Y."/>
            <person name="Murphy K.M."/>
            <person name="Yaacoobi O."/>
            <person name="Addison J.B."/>
            <person name="Wang Q."/>
            <person name="Shen Z."/>
            <person name="Briggs S.P."/>
            <person name="Bohlmann J."/>
            <person name="Castro-Falcon G."/>
            <person name="Hughes C.C."/>
            <person name="Betsiashvili M."/>
            <person name="Huffaker A."/>
            <person name="Schmelz E.A."/>
            <person name="Zerbe P."/>
        </authorList>
    </citation>
    <scope>FUNCTION</scope>
    <scope>CATALYTIC ACTIVITY</scope>
</reference>
<sequence>MASLSFASSHASLFCCQQSSSAIILRPAGALLRLSRRQPSSHTISTTDQLFPRRSRMPRNVDTHAAAERNSPSTMSSLEAVDELETNGDSAVVVVREQQQQQHLLMGATDDGLPPSPYDTAWVAMVPAPGNPLVPRFPQCVDWILQNQRSDGSWGPDGGSGDHPSSPLGKDALMSTLACVLALKTWDAGEEHVRKGLSFVGNNSPSCVMTGDERDAPVGFSVIFPGMLARAIDMGLDIPMMTQANVDAFIRLRDTELNRMAATTGSKAFMSYVAEGLGDVLDWDEAAMVYQRQNGSFFNSPATTAAAAIHGNNDRALRYLDSLVNMFGSSVPTVYPRSTYSRLHMVDTLQKMGLSRSFVSEINEMLDMTYRSWLANDDEEMMLDMSTCAMAFRLLRMHGYDVSSDGLAQFSSESSFRDSVHGQANDTEALLELYKASQIQITEDELVLVDIRSWSAKLLKEQLGSDKVSRSVDAQEVQQVLKFPFYTTLDRLEHRRHIEQFKAGGFHMLKSAYRFCKEDEELVSLAVQGFHSSQALYQQELQFLTRWAKEARLHDLEFARIMPMNTFFPNAALMYAPELSEARILCTKNCMLATAVDDLFDVGGSREEMENLVRLIDMWDEHEEVGFCSERVEILFRAIYDTSKELAAKAMAVQNRSVINHVAELWADLVRAMMTEAEWSMRGHVPSSMEEYMQVAETSFALGPIVLMPLYLIGPELPEAVVRCPEYKQLFHHMNVCGRLLNDLQSYEREAKQGKINSVLLVAPRHGGSIEAAKSEVRRAIEASRRELLRMLVAEADATVPRPFRQEFWNMCKMVHLFYMEDDCYSSPKELVHAANMVVFDPLRVREL</sequence>
<evidence type="ECO:0000250" key="1">
    <source>
        <dbReference type="UniProtKB" id="Q40577"/>
    </source>
</evidence>
<evidence type="ECO:0000255" key="2"/>
<evidence type="ECO:0000256" key="3">
    <source>
        <dbReference type="SAM" id="MobiDB-lite"/>
    </source>
</evidence>
<evidence type="ECO:0000269" key="4">
    <source>
    </source>
</evidence>
<evidence type="ECO:0000303" key="5">
    <source>
    </source>
</evidence>
<evidence type="ECO:0000305" key="6"/>
<evidence type="ECO:0000312" key="7">
    <source>
        <dbReference type="EMBL" id="ONM06227.1"/>
    </source>
</evidence>
<dbReference type="EC" id="4.2.3.196" evidence="4"/>
<dbReference type="EMBL" id="CM007647">
    <property type="protein sequence ID" value="ONM06227.1"/>
    <property type="molecule type" value="Genomic_DNA"/>
</dbReference>
<dbReference type="EMBL" id="BT067769">
    <property type="protein sequence ID" value="ACN34666.1"/>
    <property type="molecule type" value="mRNA"/>
</dbReference>
<dbReference type="RefSeq" id="NP_001169726.1">
    <property type="nucleotide sequence ID" value="NM_001176255.1"/>
</dbReference>
<dbReference type="SMR" id="A0A1D6KUI6"/>
<dbReference type="STRING" id="4577.A0A1D6KUI6"/>
<dbReference type="PaxDb" id="4577-GRMZM2G016922_P01"/>
<dbReference type="EnsemblPlants" id="Zm00001eb047160_T001">
    <property type="protein sequence ID" value="Zm00001eb047160_P001"/>
    <property type="gene ID" value="Zm00001eb047160"/>
</dbReference>
<dbReference type="GeneID" id="100383607"/>
<dbReference type="Gramene" id="Zm00001eb047160_T001">
    <property type="protein sequence ID" value="Zm00001eb047160_P001"/>
    <property type="gene ID" value="Zm00001eb047160"/>
</dbReference>
<dbReference type="KEGG" id="zma:100383607"/>
<dbReference type="eggNOG" id="ENOG502QVGX">
    <property type="taxonomic scope" value="Eukaryota"/>
</dbReference>
<dbReference type="InParanoid" id="A0A1D6KUI6"/>
<dbReference type="OMA" id="KEYIHLM"/>
<dbReference type="OrthoDB" id="638746at2759"/>
<dbReference type="BioCyc" id="MetaCyc:MONOMER-20516"/>
<dbReference type="Proteomes" id="UP000007305">
    <property type="component" value="Chromosome 1"/>
</dbReference>
<dbReference type="ExpressionAtlas" id="A0A1D6KUI6">
    <property type="expression patterns" value="baseline and differential"/>
</dbReference>
<dbReference type="GO" id="GO:0009507">
    <property type="term" value="C:chloroplast"/>
    <property type="evidence" value="ECO:0007669"/>
    <property type="project" value="UniProtKB-SubCell"/>
</dbReference>
<dbReference type="GO" id="GO:0016829">
    <property type="term" value="F:lyase activity"/>
    <property type="evidence" value="ECO:0000314"/>
    <property type="project" value="UniProtKB"/>
</dbReference>
<dbReference type="GO" id="GO:0000287">
    <property type="term" value="F:magnesium ion binding"/>
    <property type="evidence" value="ECO:0000318"/>
    <property type="project" value="GO_Central"/>
</dbReference>
<dbReference type="GO" id="GO:0010333">
    <property type="term" value="F:terpene synthase activity"/>
    <property type="evidence" value="ECO:0000314"/>
    <property type="project" value="UniProtKB"/>
</dbReference>
<dbReference type="GO" id="GO:0006952">
    <property type="term" value="P:defense response"/>
    <property type="evidence" value="ECO:0007669"/>
    <property type="project" value="UniProtKB-KW"/>
</dbReference>
<dbReference type="GO" id="GO:0051502">
    <property type="term" value="P:diterpene phytoalexin biosynthetic process"/>
    <property type="evidence" value="ECO:0000314"/>
    <property type="project" value="UniProtKB"/>
</dbReference>
<dbReference type="GO" id="GO:0016102">
    <property type="term" value="P:diterpenoid biosynthetic process"/>
    <property type="evidence" value="ECO:0000318"/>
    <property type="project" value="GO_Central"/>
</dbReference>
<dbReference type="CDD" id="cd00684">
    <property type="entry name" value="Terpene_cyclase_plant_C1"/>
    <property type="match status" value="1"/>
</dbReference>
<dbReference type="FunFam" id="1.50.10.160:FF:000002">
    <property type="entry name" value="cis-abienol synthase, chloroplastic"/>
    <property type="match status" value="1"/>
</dbReference>
<dbReference type="FunFam" id="1.50.10.130:FF:000003">
    <property type="entry name" value="Ent-cassa-12,15-diene synthase"/>
    <property type="match status" value="1"/>
</dbReference>
<dbReference type="FunFam" id="1.10.600.10:FF:000005">
    <property type="entry name" value="Ent-kaur-16-ene synthase, chloroplastic"/>
    <property type="match status" value="1"/>
</dbReference>
<dbReference type="Gene3D" id="1.50.10.160">
    <property type="match status" value="1"/>
</dbReference>
<dbReference type="Gene3D" id="1.10.600.10">
    <property type="entry name" value="Farnesyl Diphosphate Synthase"/>
    <property type="match status" value="1"/>
</dbReference>
<dbReference type="Gene3D" id="1.50.10.130">
    <property type="entry name" value="Terpene synthase, N-terminal domain"/>
    <property type="match status" value="1"/>
</dbReference>
<dbReference type="InterPro" id="IPR008949">
    <property type="entry name" value="Isoprenoid_synthase_dom_sf"/>
</dbReference>
<dbReference type="InterPro" id="IPR044814">
    <property type="entry name" value="Terpene_cyclase_plant_C1"/>
</dbReference>
<dbReference type="InterPro" id="IPR001906">
    <property type="entry name" value="Terpene_synth_N"/>
</dbReference>
<dbReference type="InterPro" id="IPR036965">
    <property type="entry name" value="Terpene_synth_N_sf"/>
</dbReference>
<dbReference type="InterPro" id="IPR050148">
    <property type="entry name" value="Terpene_synthase-like"/>
</dbReference>
<dbReference type="InterPro" id="IPR005630">
    <property type="entry name" value="Terpene_synthase_metal-bd"/>
</dbReference>
<dbReference type="InterPro" id="IPR008930">
    <property type="entry name" value="Terpenoid_cyclase/PrenylTrfase"/>
</dbReference>
<dbReference type="PANTHER" id="PTHR31739">
    <property type="entry name" value="ENT-COPALYL DIPHOSPHATE SYNTHASE, CHLOROPLASTIC"/>
    <property type="match status" value="1"/>
</dbReference>
<dbReference type="PANTHER" id="PTHR31739:SF17">
    <property type="entry name" value="ENT-SANDARACOPIMARA-8(14),15-DIENE SYNTHASE, CHLOROPLASTIC"/>
    <property type="match status" value="1"/>
</dbReference>
<dbReference type="Pfam" id="PF01397">
    <property type="entry name" value="Terpene_synth"/>
    <property type="match status" value="1"/>
</dbReference>
<dbReference type="Pfam" id="PF03936">
    <property type="entry name" value="Terpene_synth_C"/>
    <property type="match status" value="1"/>
</dbReference>
<dbReference type="SFLD" id="SFLDG01014">
    <property type="entry name" value="Terpene_Cyclase_Like_1_N-term"/>
    <property type="match status" value="1"/>
</dbReference>
<dbReference type="SUPFAM" id="SSF48239">
    <property type="entry name" value="Terpenoid cyclases/Protein prenyltransferases"/>
    <property type="match status" value="2"/>
</dbReference>
<dbReference type="SUPFAM" id="SSF48576">
    <property type="entry name" value="Terpenoid synthases"/>
    <property type="match status" value="1"/>
</dbReference>
<feature type="transit peptide" description="Chloroplast" evidence="2">
    <location>
        <begin position="1"/>
        <end position="64"/>
    </location>
</feature>
<feature type="chain" id="PRO_0000447768" description="Dolabradiene synthase KSL4, chloroplastic">
    <location>
        <begin position="65"/>
        <end position="848"/>
    </location>
</feature>
<feature type="region of interest" description="Disordered" evidence="3">
    <location>
        <begin position="148"/>
        <end position="168"/>
    </location>
</feature>
<feature type="short sequence motif" description="DDXXD motif" evidence="6">
    <location>
        <begin position="597"/>
        <end position="601"/>
    </location>
</feature>
<feature type="binding site" evidence="1">
    <location>
        <position position="597"/>
    </location>
    <ligand>
        <name>Mg(2+)</name>
        <dbReference type="ChEBI" id="CHEBI:18420"/>
        <label>1</label>
    </ligand>
</feature>
<feature type="binding site" evidence="1">
    <location>
        <position position="597"/>
    </location>
    <ligand>
        <name>Mg(2+)</name>
        <dbReference type="ChEBI" id="CHEBI:18420"/>
        <label>2</label>
    </ligand>
</feature>
<feature type="binding site" evidence="1">
    <location>
        <position position="601"/>
    </location>
    <ligand>
        <name>Mg(2+)</name>
        <dbReference type="ChEBI" id="CHEBI:18420"/>
        <label>1</label>
    </ligand>
</feature>
<feature type="binding site" evidence="1">
    <location>
        <position position="601"/>
    </location>
    <ligand>
        <name>Mg(2+)</name>
        <dbReference type="ChEBI" id="CHEBI:18420"/>
        <label>2</label>
    </ligand>
</feature>
<feature type="binding site" evidence="1">
    <location>
        <position position="742"/>
    </location>
    <ligand>
        <name>Mg(2+)</name>
        <dbReference type="ChEBI" id="CHEBI:18420"/>
        <label>3</label>
    </ligand>
</feature>
<feature type="binding site" evidence="1">
    <location>
        <position position="746"/>
    </location>
    <ligand>
        <name>Mg(2+)</name>
        <dbReference type="ChEBI" id="CHEBI:18420"/>
        <label>3</label>
    </ligand>
</feature>
<feature type="binding site" evidence="1">
    <location>
        <position position="750"/>
    </location>
    <ligand>
        <name>Mg(2+)</name>
        <dbReference type="ChEBI" id="CHEBI:18420"/>
        <label>3</label>
    </ligand>
</feature>
<feature type="sequence conflict" description="In Ref. 2; ACN34666." evidence="6" ref="2">
    <original>A</original>
    <variation>G</variation>
    <location>
        <position position="751"/>
    </location>
</feature>
<protein>
    <recommendedName>
        <fullName evidence="6">Dolabradiene synthase KSL4, chloroplastic</fullName>
        <ecNumber evidence="4">4.2.3.196</ecNumber>
    </recommendedName>
    <alternativeName>
        <fullName evidence="5">Ent-kaurene synthase-like 4</fullName>
        <shortName evidence="5">ZmKSL4</shortName>
    </alternativeName>
</protein>